<keyword id="KW-0002">3D-structure</keyword>
<keyword id="KW-1015">Disulfide bond</keyword>
<keyword id="KW-0325">Glycoprotein</keyword>
<keyword id="KW-0458">Lysosome</keyword>
<keyword id="KW-0472">Membrane</keyword>
<keyword id="KW-0597">Phosphoprotein</keyword>
<keyword id="KW-1267">Proteomics identification</keyword>
<keyword id="KW-0675">Receptor</keyword>
<keyword id="KW-1185">Reference proteome</keyword>
<keyword id="KW-0732">Signal</keyword>
<keyword id="KW-0812">Transmembrane</keyword>
<keyword id="KW-1133">Transmembrane helix</keyword>
<keyword id="KW-0813">Transport</keyword>
<organism>
    <name type="scientific">Homo sapiens</name>
    <name type="common">Human</name>
    <dbReference type="NCBI Taxonomy" id="9606"/>
    <lineage>
        <taxon>Eukaryota</taxon>
        <taxon>Metazoa</taxon>
        <taxon>Chordata</taxon>
        <taxon>Craniata</taxon>
        <taxon>Vertebrata</taxon>
        <taxon>Euteleostomi</taxon>
        <taxon>Mammalia</taxon>
        <taxon>Eutheria</taxon>
        <taxon>Euarchontoglires</taxon>
        <taxon>Primates</taxon>
        <taxon>Haplorrhini</taxon>
        <taxon>Catarrhini</taxon>
        <taxon>Hominidae</taxon>
        <taxon>Homo</taxon>
    </lineage>
</organism>
<accession>P20645</accession>
<accession>A8K528</accession>
<accession>D3DUV5</accession>
<name>MPRD_HUMAN</name>
<protein>
    <recommendedName>
        <fullName>Cation-dependent mannose-6-phosphate receptor</fullName>
        <shortName>CD Man-6-P receptor</shortName>
        <shortName>CD-MPR</shortName>
    </recommendedName>
    <alternativeName>
        <fullName>46 kDa mannose 6-phosphate receptor</fullName>
        <shortName>MPR 46</shortName>
    </alternativeName>
</protein>
<dbReference type="EMBL" id="M16985">
    <property type="protein sequence ID" value="AAA59542.1"/>
    <property type="molecule type" value="mRNA"/>
</dbReference>
<dbReference type="EMBL" id="X56254">
    <property type="protein sequence ID" value="CAB94715.1"/>
    <property type="molecule type" value="Genomic_DNA"/>
</dbReference>
<dbReference type="EMBL" id="X56255">
    <property type="protein sequence ID" value="CAB94715.1"/>
    <property type="status" value="JOINED"/>
    <property type="molecule type" value="Genomic_DNA"/>
</dbReference>
<dbReference type="EMBL" id="X56256">
    <property type="protein sequence ID" value="CAB94715.1"/>
    <property type="status" value="JOINED"/>
    <property type="molecule type" value="Genomic_DNA"/>
</dbReference>
<dbReference type="EMBL" id="X56257">
    <property type="protein sequence ID" value="CAB94715.1"/>
    <property type="status" value="JOINED"/>
    <property type="molecule type" value="Genomic_DNA"/>
</dbReference>
<dbReference type="EMBL" id="AK291143">
    <property type="protein sequence ID" value="BAF83832.1"/>
    <property type="molecule type" value="mRNA"/>
</dbReference>
<dbReference type="EMBL" id="CH471116">
    <property type="protein sequence ID" value="EAW88596.1"/>
    <property type="molecule type" value="Genomic_DNA"/>
</dbReference>
<dbReference type="EMBL" id="CH471116">
    <property type="protein sequence ID" value="EAW88597.1"/>
    <property type="molecule type" value="Genomic_DNA"/>
</dbReference>
<dbReference type="EMBL" id="CH471116">
    <property type="protein sequence ID" value="EAW88598.1"/>
    <property type="molecule type" value="Genomic_DNA"/>
</dbReference>
<dbReference type="EMBL" id="CH471116">
    <property type="protein sequence ID" value="EAW88599.1"/>
    <property type="molecule type" value="Genomic_DNA"/>
</dbReference>
<dbReference type="EMBL" id="BC024206">
    <property type="protein sequence ID" value="AAH24206.1"/>
    <property type="molecule type" value="mRNA"/>
</dbReference>
<dbReference type="CCDS" id="CCDS8598.1"/>
<dbReference type="PIR" id="S15368">
    <property type="entry name" value="A32700"/>
</dbReference>
<dbReference type="RefSeq" id="NP_001401249.1">
    <property type="nucleotide sequence ID" value="NM_001414320.1"/>
</dbReference>
<dbReference type="RefSeq" id="NP_001401260.1">
    <property type="nucleotide sequence ID" value="NM_001414331.1"/>
</dbReference>
<dbReference type="RefSeq" id="NP_001401261.1">
    <property type="nucleotide sequence ID" value="NM_001414332.1"/>
</dbReference>
<dbReference type="RefSeq" id="NP_001401262.1">
    <property type="nucleotide sequence ID" value="NM_001414333.1"/>
</dbReference>
<dbReference type="RefSeq" id="NP_002346.1">
    <property type="nucleotide sequence ID" value="NM_002355.4"/>
</dbReference>
<dbReference type="RefSeq" id="XP_005253433.1">
    <property type="nucleotide sequence ID" value="XM_005253376.2"/>
</dbReference>
<dbReference type="RefSeq" id="XP_047284806.1">
    <property type="nucleotide sequence ID" value="XM_047428850.1"/>
</dbReference>
<dbReference type="RefSeq" id="XP_054228029.1">
    <property type="nucleotide sequence ID" value="XM_054372054.1"/>
</dbReference>
<dbReference type="PDB" id="1JUQ">
    <property type="method" value="X-ray"/>
    <property type="resolution" value="2.20 A"/>
    <property type="chains" value="E/F/G/H=265-277"/>
</dbReference>
<dbReference type="PDBsum" id="1JUQ"/>
<dbReference type="SMR" id="P20645"/>
<dbReference type="BioGRID" id="110251">
    <property type="interactions" value="72"/>
</dbReference>
<dbReference type="ELM" id="P20645"/>
<dbReference type="FunCoup" id="P20645">
    <property type="interactions" value="2463"/>
</dbReference>
<dbReference type="IntAct" id="P20645">
    <property type="interactions" value="29"/>
</dbReference>
<dbReference type="MINT" id="P20645"/>
<dbReference type="STRING" id="9606.ENSP00000000412"/>
<dbReference type="BindingDB" id="P20645"/>
<dbReference type="ChEMBL" id="CHEMBL5788"/>
<dbReference type="DrugBank" id="DB02755">
    <property type="generic name" value="1-3 Sugar Ring of Pentamannosyl 6-Phosphate"/>
</dbReference>
<dbReference type="DrugBank" id="DB15874">
    <property type="generic name" value="Agalsidase alfa"/>
</dbReference>
<dbReference type="DrugBank" id="DB00103">
    <property type="generic name" value="Agalsidase beta"/>
</dbReference>
<dbReference type="DrugBank" id="DB01272">
    <property type="generic name" value="Alglucosidase alfa"/>
</dbReference>
<dbReference type="DrugBank" id="DB02900">
    <property type="generic name" value="alpha-D-mannose 6-phosphate"/>
</dbReference>
<dbReference type="TCDB" id="9.B.247.1.1">
    <property type="family name" value="the mannose 6-phosphate receptor (m6pr) family"/>
</dbReference>
<dbReference type="GlyConnect" id="1083">
    <property type="glycosylation" value="20 N-Linked glycans (2 sites)"/>
</dbReference>
<dbReference type="GlyCosmos" id="P20645">
    <property type="glycosylation" value="5 sites, 20 glycans"/>
</dbReference>
<dbReference type="GlyGen" id="P20645">
    <property type="glycosylation" value="10 sites, 80 N-linked glycans (5 sites), 1 O-linked glycan (1 site)"/>
</dbReference>
<dbReference type="iPTMnet" id="P20645"/>
<dbReference type="MetOSite" id="P20645"/>
<dbReference type="PhosphoSitePlus" id="P20645"/>
<dbReference type="SwissPalm" id="P20645"/>
<dbReference type="BioMuta" id="M6PR"/>
<dbReference type="DMDM" id="127293"/>
<dbReference type="CPTAC" id="CPTAC-1308"/>
<dbReference type="jPOST" id="P20645"/>
<dbReference type="MassIVE" id="P20645"/>
<dbReference type="PaxDb" id="9606-ENSP00000000412"/>
<dbReference type="PeptideAtlas" id="P20645"/>
<dbReference type="ProteomicsDB" id="53769"/>
<dbReference type="Pumba" id="P20645"/>
<dbReference type="Antibodypedia" id="11573">
    <property type="antibodies" value="276 antibodies from 31 providers"/>
</dbReference>
<dbReference type="DNASU" id="4074"/>
<dbReference type="Ensembl" id="ENST00000000412.8">
    <property type="protein sequence ID" value="ENSP00000000412.3"/>
    <property type="gene ID" value="ENSG00000003056.8"/>
</dbReference>
<dbReference type="GeneID" id="4074"/>
<dbReference type="KEGG" id="hsa:4074"/>
<dbReference type="MANE-Select" id="ENST00000000412.8">
    <property type="protein sequence ID" value="ENSP00000000412.3"/>
    <property type="RefSeq nucleotide sequence ID" value="NM_002355.4"/>
    <property type="RefSeq protein sequence ID" value="NP_002346.1"/>
</dbReference>
<dbReference type="UCSC" id="uc001qvf.4">
    <property type="organism name" value="human"/>
</dbReference>
<dbReference type="AGR" id="HGNC:6752"/>
<dbReference type="CTD" id="4074"/>
<dbReference type="DisGeNET" id="4074"/>
<dbReference type="GeneCards" id="M6PR"/>
<dbReference type="HGNC" id="HGNC:6752">
    <property type="gene designation" value="M6PR"/>
</dbReference>
<dbReference type="HPA" id="ENSG00000003056">
    <property type="expression patterns" value="Low tissue specificity"/>
</dbReference>
<dbReference type="MIM" id="154540">
    <property type="type" value="gene"/>
</dbReference>
<dbReference type="neXtProt" id="NX_P20645"/>
<dbReference type="OpenTargets" id="ENSG00000003056"/>
<dbReference type="PharmGKB" id="PA30513"/>
<dbReference type="VEuPathDB" id="HostDB:ENSG00000003056"/>
<dbReference type="eggNOG" id="ENOG502QTJ5">
    <property type="taxonomic scope" value="Eukaryota"/>
</dbReference>
<dbReference type="GeneTree" id="ENSGT00390000002109"/>
<dbReference type="HOGENOM" id="CLU_058440_0_0_1"/>
<dbReference type="InParanoid" id="P20645"/>
<dbReference type="OMA" id="NYIYHFR"/>
<dbReference type="OrthoDB" id="29460at2759"/>
<dbReference type="PAN-GO" id="P20645">
    <property type="GO annotations" value="2 GO annotations based on evolutionary models"/>
</dbReference>
<dbReference type="PhylomeDB" id="P20645"/>
<dbReference type="TreeFam" id="TF328910"/>
<dbReference type="PathwayCommons" id="P20645"/>
<dbReference type="Reactome" id="R-HSA-432720">
    <property type="pathway name" value="Lysosome Vesicle Biogenesis"/>
</dbReference>
<dbReference type="Reactome" id="R-HSA-6811440">
    <property type="pathway name" value="Retrograde transport at the Trans-Golgi-Network"/>
</dbReference>
<dbReference type="Reactome" id="R-HSA-8856825">
    <property type="pathway name" value="Cargo recognition for clathrin-mediated endocytosis"/>
</dbReference>
<dbReference type="Reactome" id="R-HSA-8856828">
    <property type="pathway name" value="Clathrin-mediated endocytosis"/>
</dbReference>
<dbReference type="Reactome" id="R-HSA-9840310">
    <property type="pathway name" value="Glycosphingolipid catabolism"/>
</dbReference>
<dbReference type="SignaLink" id="P20645"/>
<dbReference type="SIGNOR" id="P20645"/>
<dbReference type="BioGRID-ORCS" id="4074">
    <property type="hits" value="11 hits in 1165 CRISPR screens"/>
</dbReference>
<dbReference type="ChiTaRS" id="M6PR">
    <property type="organism name" value="human"/>
</dbReference>
<dbReference type="EvolutionaryTrace" id="P20645"/>
<dbReference type="GeneWiki" id="Cation-dependent_mannose-6-phosphate_receptor"/>
<dbReference type="GenomeRNAi" id="4074"/>
<dbReference type="Pharos" id="P20645">
    <property type="development level" value="Tbio"/>
</dbReference>
<dbReference type="PRO" id="PR:P20645"/>
<dbReference type="Proteomes" id="UP000005640">
    <property type="component" value="Chromosome 12"/>
</dbReference>
<dbReference type="RNAct" id="P20645">
    <property type="molecule type" value="protein"/>
</dbReference>
<dbReference type="Bgee" id="ENSG00000003056">
    <property type="expression patterns" value="Expressed in monocyte and 208 other cell types or tissues"/>
</dbReference>
<dbReference type="ExpressionAtlas" id="P20645">
    <property type="expression patterns" value="baseline and differential"/>
</dbReference>
<dbReference type="GO" id="GO:0030669">
    <property type="term" value="C:clathrin-coated endocytic vesicle membrane"/>
    <property type="evidence" value="ECO:0000304"/>
    <property type="project" value="Reactome"/>
</dbReference>
<dbReference type="GO" id="GO:0005768">
    <property type="term" value="C:endosome"/>
    <property type="evidence" value="ECO:0000314"/>
    <property type="project" value="MGI"/>
</dbReference>
<dbReference type="GO" id="GO:0005770">
    <property type="term" value="C:late endosome"/>
    <property type="evidence" value="ECO:0007669"/>
    <property type="project" value="Ensembl"/>
</dbReference>
<dbReference type="GO" id="GO:0005765">
    <property type="term" value="C:lysosomal membrane"/>
    <property type="evidence" value="ECO:0007669"/>
    <property type="project" value="UniProtKB-SubCell"/>
</dbReference>
<dbReference type="GO" id="GO:0016020">
    <property type="term" value="C:membrane"/>
    <property type="evidence" value="ECO:0007005"/>
    <property type="project" value="UniProtKB"/>
</dbReference>
<dbReference type="GO" id="GO:0048471">
    <property type="term" value="C:perinuclear region of cytoplasm"/>
    <property type="evidence" value="ECO:0000314"/>
    <property type="project" value="UniProtKB"/>
</dbReference>
<dbReference type="GO" id="GO:0005886">
    <property type="term" value="C:plasma membrane"/>
    <property type="evidence" value="ECO:0000304"/>
    <property type="project" value="Reactome"/>
</dbReference>
<dbReference type="GO" id="GO:0005802">
    <property type="term" value="C:trans-Golgi network"/>
    <property type="evidence" value="ECO:0000318"/>
    <property type="project" value="GO_Central"/>
</dbReference>
<dbReference type="GO" id="GO:0032588">
    <property type="term" value="C:trans-Golgi network membrane"/>
    <property type="evidence" value="ECO:0000304"/>
    <property type="project" value="Reactome"/>
</dbReference>
<dbReference type="GO" id="GO:0030133">
    <property type="term" value="C:transport vesicle"/>
    <property type="evidence" value="ECO:0000304"/>
    <property type="project" value="Reactome"/>
</dbReference>
<dbReference type="GO" id="GO:0019904">
    <property type="term" value="F:protein domain specific binding"/>
    <property type="evidence" value="ECO:0007669"/>
    <property type="project" value="InterPro"/>
</dbReference>
<dbReference type="GO" id="GO:0140318">
    <property type="term" value="F:protein transporter activity"/>
    <property type="evidence" value="ECO:0000304"/>
    <property type="project" value="Reactome"/>
</dbReference>
<dbReference type="GO" id="GO:1905394">
    <property type="term" value="F:retromer complex binding"/>
    <property type="evidence" value="ECO:0000315"/>
    <property type="project" value="ParkinsonsUK-UCL"/>
</dbReference>
<dbReference type="GO" id="GO:0004888">
    <property type="term" value="F:transmembrane signaling receptor activity"/>
    <property type="evidence" value="ECO:0000304"/>
    <property type="project" value="ProtInc"/>
</dbReference>
<dbReference type="GO" id="GO:0008333">
    <property type="term" value="P:endosome to lysosome transport"/>
    <property type="evidence" value="ECO:0000304"/>
    <property type="project" value="ProtInc"/>
</dbReference>
<dbReference type="GO" id="GO:0046479">
    <property type="term" value="P:glycosphingolipid catabolic process"/>
    <property type="evidence" value="ECO:0000304"/>
    <property type="project" value="Reactome"/>
</dbReference>
<dbReference type="GO" id="GO:0007041">
    <property type="term" value="P:lysosomal transport"/>
    <property type="evidence" value="ECO:0000250"/>
    <property type="project" value="UniProtKB"/>
</dbReference>
<dbReference type="GO" id="GO:0006622">
    <property type="term" value="P:protein targeting to lysosome"/>
    <property type="evidence" value="ECO:0000318"/>
    <property type="project" value="GO_Central"/>
</dbReference>
<dbReference type="GO" id="GO:0006898">
    <property type="term" value="P:receptor-mediated endocytosis"/>
    <property type="evidence" value="ECO:0000304"/>
    <property type="project" value="ProtInc"/>
</dbReference>
<dbReference type="GO" id="GO:0033299">
    <property type="term" value="P:secretion of lysosomal enzymes"/>
    <property type="evidence" value="ECO:0007669"/>
    <property type="project" value="Ensembl"/>
</dbReference>
<dbReference type="FunFam" id="2.70.130.10:FF:000008">
    <property type="entry name" value="Cation-dependent mannose-6-phosphate receptor"/>
    <property type="match status" value="1"/>
</dbReference>
<dbReference type="Gene3D" id="2.70.130.10">
    <property type="entry name" value="Mannose-6-phosphate receptor binding domain"/>
    <property type="match status" value="1"/>
</dbReference>
<dbReference type="InterPro" id="IPR028927">
    <property type="entry name" value="Man-6-P_rcpt"/>
</dbReference>
<dbReference type="InterPro" id="IPR000296">
    <property type="entry name" value="Man-6-P_rcpt_cation_dep"/>
</dbReference>
<dbReference type="InterPro" id="IPR009011">
    <property type="entry name" value="Man6P_isomerase_rcpt-bd_dom_sf"/>
</dbReference>
<dbReference type="InterPro" id="IPR044865">
    <property type="entry name" value="MRH_dom"/>
</dbReference>
<dbReference type="PANTHER" id="PTHR15071:SF29">
    <property type="entry name" value="CATION-DEPENDENT MANNOSE-6-PHOSPHATE RECEPTOR"/>
    <property type="match status" value="1"/>
</dbReference>
<dbReference type="PANTHER" id="PTHR15071">
    <property type="entry name" value="MANNOSE-6-PHOSPHATE RECEPTOR FAMILY MEMBER"/>
    <property type="match status" value="1"/>
</dbReference>
<dbReference type="Pfam" id="PF02157">
    <property type="entry name" value="Man-6-P_recep"/>
    <property type="match status" value="1"/>
</dbReference>
<dbReference type="PRINTS" id="PR00715">
    <property type="entry name" value="MAN6PRECEPTR"/>
</dbReference>
<dbReference type="SUPFAM" id="SSF50911">
    <property type="entry name" value="Mannose 6-phosphate receptor domain"/>
    <property type="match status" value="1"/>
</dbReference>
<dbReference type="PROSITE" id="PS51914">
    <property type="entry name" value="MRH"/>
    <property type="match status" value="1"/>
</dbReference>
<reference key="1">
    <citation type="journal article" date="1987" name="Proc. Natl. Acad. Sci. U.S.A.">
        <title>Cloning of a cDNA encoding the human cation-dependent mannose 6-phosphate-specific receptor.</title>
        <authorList>
            <person name="Pohlmann R."/>
            <person name="Nagel G."/>
            <person name="Schmidt B."/>
            <person name="Stein M."/>
            <person name="Lorkowski G."/>
            <person name="Krentler C."/>
            <person name="Cully J."/>
            <person name="Meyer H.E."/>
            <person name="Grzeschik K.H."/>
            <person name="Mersmann G."/>
            <person name="Hasilik A."/>
            <person name="von Figura K."/>
        </authorList>
    </citation>
    <scope>NUCLEOTIDE SEQUENCE [MRNA]</scope>
</reference>
<reference key="2">
    <citation type="journal article" date="1991" name="Eur. J. Biochem.">
        <title>Isolation and analysis of the human 46-kDa mannose 6-phosphate receptor gene.</title>
        <authorList>
            <person name="Klier H.J."/>
            <person name="von Figura K."/>
            <person name="Pohlmann R."/>
        </authorList>
    </citation>
    <scope>NUCLEOTIDE SEQUENCE [GENOMIC DNA]</scope>
    <source>
        <tissue>Leukocyte</tissue>
    </source>
</reference>
<reference key="3">
    <citation type="journal article" date="2004" name="Nat. Genet.">
        <title>Complete sequencing and characterization of 21,243 full-length human cDNAs.</title>
        <authorList>
            <person name="Ota T."/>
            <person name="Suzuki Y."/>
            <person name="Nishikawa T."/>
            <person name="Otsuki T."/>
            <person name="Sugiyama T."/>
            <person name="Irie R."/>
            <person name="Wakamatsu A."/>
            <person name="Hayashi K."/>
            <person name="Sato H."/>
            <person name="Nagai K."/>
            <person name="Kimura K."/>
            <person name="Makita H."/>
            <person name="Sekine M."/>
            <person name="Obayashi M."/>
            <person name="Nishi T."/>
            <person name="Shibahara T."/>
            <person name="Tanaka T."/>
            <person name="Ishii S."/>
            <person name="Yamamoto J."/>
            <person name="Saito K."/>
            <person name="Kawai Y."/>
            <person name="Isono Y."/>
            <person name="Nakamura Y."/>
            <person name="Nagahari K."/>
            <person name="Murakami K."/>
            <person name="Yasuda T."/>
            <person name="Iwayanagi T."/>
            <person name="Wagatsuma M."/>
            <person name="Shiratori A."/>
            <person name="Sudo H."/>
            <person name="Hosoiri T."/>
            <person name="Kaku Y."/>
            <person name="Kodaira H."/>
            <person name="Kondo H."/>
            <person name="Sugawara M."/>
            <person name="Takahashi M."/>
            <person name="Kanda K."/>
            <person name="Yokoi T."/>
            <person name="Furuya T."/>
            <person name="Kikkawa E."/>
            <person name="Omura Y."/>
            <person name="Abe K."/>
            <person name="Kamihara K."/>
            <person name="Katsuta N."/>
            <person name="Sato K."/>
            <person name="Tanikawa M."/>
            <person name="Yamazaki M."/>
            <person name="Ninomiya K."/>
            <person name="Ishibashi T."/>
            <person name="Yamashita H."/>
            <person name="Murakawa K."/>
            <person name="Fujimori K."/>
            <person name="Tanai H."/>
            <person name="Kimata M."/>
            <person name="Watanabe M."/>
            <person name="Hiraoka S."/>
            <person name="Chiba Y."/>
            <person name="Ishida S."/>
            <person name="Ono Y."/>
            <person name="Takiguchi S."/>
            <person name="Watanabe S."/>
            <person name="Yosida M."/>
            <person name="Hotuta T."/>
            <person name="Kusano J."/>
            <person name="Kanehori K."/>
            <person name="Takahashi-Fujii A."/>
            <person name="Hara H."/>
            <person name="Tanase T.-O."/>
            <person name="Nomura Y."/>
            <person name="Togiya S."/>
            <person name="Komai F."/>
            <person name="Hara R."/>
            <person name="Takeuchi K."/>
            <person name="Arita M."/>
            <person name="Imose N."/>
            <person name="Musashino K."/>
            <person name="Yuuki H."/>
            <person name="Oshima A."/>
            <person name="Sasaki N."/>
            <person name="Aotsuka S."/>
            <person name="Yoshikawa Y."/>
            <person name="Matsunawa H."/>
            <person name="Ichihara T."/>
            <person name="Shiohata N."/>
            <person name="Sano S."/>
            <person name="Moriya S."/>
            <person name="Momiyama H."/>
            <person name="Satoh N."/>
            <person name="Takami S."/>
            <person name="Terashima Y."/>
            <person name="Suzuki O."/>
            <person name="Nakagawa S."/>
            <person name="Senoh A."/>
            <person name="Mizoguchi H."/>
            <person name="Goto Y."/>
            <person name="Shimizu F."/>
            <person name="Wakebe H."/>
            <person name="Hishigaki H."/>
            <person name="Watanabe T."/>
            <person name="Sugiyama A."/>
            <person name="Takemoto M."/>
            <person name="Kawakami B."/>
            <person name="Yamazaki M."/>
            <person name="Watanabe K."/>
            <person name="Kumagai A."/>
            <person name="Itakura S."/>
            <person name="Fukuzumi Y."/>
            <person name="Fujimori Y."/>
            <person name="Komiyama M."/>
            <person name="Tashiro H."/>
            <person name="Tanigami A."/>
            <person name="Fujiwara T."/>
            <person name="Ono T."/>
            <person name="Yamada K."/>
            <person name="Fujii Y."/>
            <person name="Ozaki K."/>
            <person name="Hirao M."/>
            <person name="Ohmori Y."/>
            <person name="Kawabata A."/>
            <person name="Hikiji T."/>
            <person name="Kobatake N."/>
            <person name="Inagaki H."/>
            <person name="Ikema Y."/>
            <person name="Okamoto S."/>
            <person name="Okitani R."/>
            <person name="Kawakami T."/>
            <person name="Noguchi S."/>
            <person name="Itoh T."/>
            <person name="Shigeta K."/>
            <person name="Senba T."/>
            <person name="Matsumura K."/>
            <person name="Nakajima Y."/>
            <person name="Mizuno T."/>
            <person name="Morinaga M."/>
            <person name="Sasaki M."/>
            <person name="Togashi T."/>
            <person name="Oyama M."/>
            <person name="Hata H."/>
            <person name="Watanabe M."/>
            <person name="Komatsu T."/>
            <person name="Mizushima-Sugano J."/>
            <person name="Satoh T."/>
            <person name="Shirai Y."/>
            <person name="Takahashi Y."/>
            <person name="Nakagawa K."/>
            <person name="Okumura K."/>
            <person name="Nagase T."/>
            <person name="Nomura N."/>
            <person name="Kikuchi H."/>
            <person name="Masuho Y."/>
            <person name="Yamashita R."/>
            <person name="Nakai K."/>
            <person name="Yada T."/>
            <person name="Nakamura Y."/>
            <person name="Ohara O."/>
            <person name="Isogai T."/>
            <person name="Sugano S."/>
        </authorList>
    </citation>
    <scope>NUCLEOTIDE SEQUENCE [LARGE SCALE MRNA]</scope>
</reference>
<reference key="4">
    <citation type="submission" date="2005-09" db="EMBL/GenBank/DDBJ databases">
        <authorList>
            <person name="Mural R.J."/>
            <person name="Istrail S."/>
            <person name="Sutton G.G."/>
            <person name="Florea L."/>
            <person name="Halpern A.L."/>
            <person name="Mobarry C.M."/>
            <person name="Lippert R."/>
            <person name="Walenz B."/>
            <person name="Shatkay H."/>
            <person name="Dew I."/>
            <person name="Miller J.R."/>
            <person name="Flanigan M.J."/>
            <person name="Edwards N.J."/>
            <person name="Bolanos R."/>
            <person name="Fasulo D."/>
            <person name="Halldorsson B.V."/>
            <person name="Hannenhalli S."/>
            <person name="Turner R."/>
            <person name="Yooseph S."/>
            <person name="Lu F."/>
            <person name="Nusskern D.R."/>
            <person name="Shue B.C."/>
            <person name="Zheng X.H."/>
            <person name="Zhong F."/>
            <person name="Delcher A.L."/>
            <person name="Huson D.H."/>
            <person name="Kravitz S.A."/>
            <person name="Mouchard L."/>
            <person name="Reinert K."/>
            <person name="Remington K.A."/>
            <person name="Clark A.G."/>
            <person name="Waterman M.S."/>
            <person name="Eichler E.E."/>
            <person name="Adams M.D."/>
            <person name="Hunkapiller M.W."/>
            <person name="Myers E.W."/>
            <person name="Venter J.C."/>
        </authorList>
    </citation>
    <scope>NUCLEOTIDE SEQUENCE [LARGE SCALE GENOMIC DNA]</scope>
</reference>
<reference key="5">
    <citation type="journal article" date="2004" name="Genome Res.">
        <title>The status, quality, and expansion of the NIH full-length cDNA project: the Mammalian Gene Collection (MGC).</title>
        <authorList>
            <consortium name="The MGC Project Team"/>
        </authorList>
    </citation>
    <scope>NUCLEOTIDE SEQUENCE [LARGE SCALE MRNA]</scope>
    <source>
        <tissue>Muscle</tissue>
    </source>
</reference>
<reference key="6">
    <citation type="journal article" date="2001" name="Science">
        <title>Sorting of mannose 6-phosphate receptors mediated by the GGAs.</title>
        <authorList>
            <person name="Puertollano R."/>
            <person name="Aguilar R.C."/>
            <person name="Gorshkova I."/>
            <person name="Crouch R.J."/>
            <person name="Bonifacino J.S."/>
        </authorList>
    </citation>
    <scope>INTERACTION WITH GGA1 AND GGA3</scope>
</reference>
<reference key="7">
    <citation type="journal article" date="2002" name="J. Biol. Chem.">
        <title>Interaction of the cation-dependent mannose 6-phosphate receptor with GGA proteins.</title>
        <authorList>
            <person name="Doray B."/>
            <person name="Bruns K."/>
            <person name="Ghosh P."/>
            <person name="Kornfeld S."/>
        </authorList>
    </citation>
    <scope>INTERACTION WITH GGA2</scope>
</reference>
<reference key="8">
    <citation type="journal article" date="2008" name="Proc. Natl. Acad. Sci. U.S.A.">
        <title>A quantitative atlas of mitotic phosphorylation.</title>
        <authorList>
            <person name="Dephoure N."/>
            <person name="Zhou C."/>
            <person name="Villen J."/>
            <person name="Beausoleil S.A."/>
            <person name="Bakalarski C.E."/>
            <person name="Elledge S.J."/>
            <person name="Gygi S.P."/>
        </authorList>
    </citation>
    <scope>IDENTIFICATION BY MASS SPECTROMETRY [LARGE SCALE ANALYSIS]</scope>
    <source>
        <tissue>Cervix carcinoma</tissue>
    </source>
</reference>
<reference key="9">
    <citation type="journal article" date="2009" name="J. Proteome Res.">
        <title>Glycoproteomics analysis of human liver tissue by combination of multiple enzyme digestion and hydrazide chemistry.</title>
        <authorList>
            <person name="Chen R."/>
            <person name="Jiang X."/>
            <person name="Sun D."/>
            <person name="Han G."/>
            <person name="Wang F."/>
            <person name="Ye M."/>
            <person name="Wang L."/>
            <person name="Zou H."/>
        </authorList>
    </citation>
    <scope>GLYCOSYLATION [LARGE SCALE ANALYSIS] AT ASN-83 AND ASN-107</scope>
    <source>
        <tissue>Liver</tissue>
    </source>
</reference>
<reference key="10">
    <citation type="journal article" date="2011" name="BMC Syst. Biol.">
        <title>Initial characterization of the human central proteome.</title>
        <authorList>
            <person name="Burkard T.R."/>
            <person name="Planyavsky M."/>
            <person name="Kaupe I."/>
            <person name="Breitwieser F.P."/>
            <person name="Buerckstuemmer T."/>
            <person name="Bennett K.L."/>
            <person name="Superti-Furga G."/>
            <person name="Colinge J."/>
        </authorList>
    </citation>
    <scope>IDENTIFICATION BY MASS SPECTROMETRY [LARGE SCALE ANALYSIS]</scope>
</reference>
<reference key="11">
    <citation type="journal article" date="2014" name="J. Proteomics">
        <title>An enzyme assisted RP-RPLC approach for in-depth analysis of human liver phosphoproteome.</title>
        <authorList>
            <person name="Bian Y."/>
            <person name="Song C."/>
            <person name="Cheng K."/>
            <person name="Dong M."/>
            <person name="Wang F."/>
            <person name="Huang J."/>
            <person name="Sun D."/>
            <person name="Wang L."/>
            <person name="Ye M."/>
            <person name="Zou H."/>
        </authorList>
    </citation>
    <scope>IDENTIFICATION BY MASS SPECTROMETRY [LARGE SCALE ANALYSIS]</scope>
    <source>
        <tissue>Liver</tissue>
    </source>
</reference>
<reference key="12">
    <citation type="journal article" date="2015" name="Proteomics">
        <title>N-terminome analysis of the human mitochondrial proteome.</title>
        <authorList>
            <person name="Vaca Jacome A.S."/>
            <person name="Rabilloud T."/>
            <person name="Schaeffer-Reiss C."/>
            <person name="Rompais M."/>
            <person name="Ayoub D."/>
            <person name="Lane L."/>
            <person name="Bairoch A."/>
            <person name="Van Dorsselaer A."/>
            <person name="Carapito C."/>
        </authorList>
    </citation>
    <scope>IDENTIFICATION BY MASS SPECTROMETRY [LARGE SCALE ANALYSIS]</scope>
</reference>
<comment type="function">
    <text>Transport of phosphorylated lysosomal enzymes from the Golgi complex and the cell surface to lysosomes. Lysosomal enzymes bearing phosphomannosyl residues bind specifically to mannose-6-phosphate receptors in the Golgi apparatus and the resulting receptor-ligand complex is transported to an acidic prelyosomal compartment where the low pH mediates the dissociation of the complex.</text>
</comment>
<comment type="subunit">
    <text>Homodimer. Binds GGA1, GGA2 and GGA3.</text>
</comment>
<comment type="interaction">
    <interactant intactId="EBI-2907262">
        <id>P20645</id>
    </interactant>
    <interactant intactId="EBI-10200977">
        <id>P21964-2</id>
        <label>COMT</label>
    </interactant>
    <organismsDiffer>false</organismsDiffer>
    <experiments>3</experiments>
</comment>
<comment type="interaction">
    <interactant intactId="EBI-2907262">
        <id>P20645</id>
    </interactant>
    <interactant intactId="EBI-715161">
        <id>Q9UNI6</id>
        <label>DUSP12</label>
    </interactant>
    <organismsDiffer>false</organismsDiffer>
    <experiments>3</experiments>
</comment>
<comment type="interaction">
    <interactant intactId="EBI-2907262">
        <id>P20645</id>
    </interactant>
    <interactant intactId="EBI-447404">
        <id>Q9NZ52</id>
        <label>GGA3</label>
    </interactant>
    <organismsDiffer>false</organismsDiffer>
    <experiments>2</experiments>
</comment>
<comment type="interaction">
    <interactant intactId="EBI-2907262">
        <id>P20645</id>
    </interactant>
    <interactant intactId="EBI-6166686">
        <id>Q96F15</id>
        <label>GIMAP5</label>
    </interactant>
    <organismsDiffer>false</organismsDiffer>
    <experiments>3</experiments>
</comment>
<comment type="interaction">
    <interactant intactId="EBI-2907262">
        <id>P20645</id>
    </interactant>
    <interactant intactId="EBI-12007212">
        <id>Q86UP2-3</id>
        <label>KTN1</label>
    </interactant>
    <organismsDiffer>false</organismsDiffer>
    <experiments>3</experiments>
</comment>
<comment type="interaction">
    <interactant intactId="EBI-2907262">
        <id>P20645</id>
    </interactant>
    <interactant intactId="EBI-10317425">
        <id>Q9NZG7</id>
        <label>NINJ2</label>
    </interactant>
    <organismsDiffer>false</organismsDiffer>
    <experiments>3</experiments>
</comment>
<comment type="interaction">
    <interactant intactId="EBI-2907262">
        <id>P20645</id>
    </interactant>
    <interactant intactId="EBI-8640191">
        <id>Q9NRQ5</id>
        <label>SMCO4</label>
    </interactant>
    <organismsDiffer>false</organismsDiffer>
    <experiments>3</experiments>
</comment>
<comment type="subcellular location">
    <subcellularLocation>
        <location>Lysosome membrane</location>
        <topology>Single-pass type I membrane protein</topology>
    </subcellularLocation>
</comment>
<comment type="domain">
    <text>The extracellular domain is homologous to the repeating units (of approximately 147 AA) of the cation-independent mannose 6-phosphate receptor.</text>
</comment>
<comment type="miscellaneous">
    <text>This receptor has optimal binding in the presence of divalent cations.</text>
</comment>
<sequence>MFPFYSCWRTGLLLLLLAVAVRESWQTEEKTCDLVGEKGKESEKELALVKRLKPLFNKSFESTVGQGSDTYIYIFRVCREAGNHTSGAGLVQINKSNGKETVVGRLNETHIFNGSNWIMLIYKGGDEYDNHCGKEQRRAVVMISCNRHTLADNFNPVSEERGKVQDCFYLFEMDSSLACSPEISHLSVGSILLVTFASLVAVYVVGGFLYQRLVVGAKGMEQFPHLAFWQDLGNLVADGCDFVCRSKPRNVPAAYRGVGDDQLGEESEERDDHLLPM</sequence>
<gene>
    <name type="primary">M6PR</name>
    <name type="synonym">MPR46</name>
    <name type="synonym">MPRD</name>
</gene>
<feature type="signal peptide">
    <location>
        <begin position="1"/>
        <end position="26"/>
    </location>
</feature>
<feature type="chain" id="PRO_0000019226" description="Cation-dependent mannose-6-phosphate receptor">
    <location>
        <begin position="27"/>
        <end position="277"/>
    </location>
</feature>
<feature type="topological domain" description="Lumenal" evidence="2">
    <location>
        <begin position="27"/>
        <end position="185"/>
    </location>
</feature>
<feature type="transmembrane region" description="Helical" evidence="2">
    <location>
        <begin position="186"/>
        <end position="210"/>
    </location>
</feature>
<feature type="topological domain" description="Cytoplasmic" evidence="2">
    <location>
        <begin position="211"/>
        <end position="277"/>
    </location>
</feature>
<feature type="domain" description="MRH" evidence="3">
    <location>
        <begin position="30"/>
        <end position="181"/>
    </location>
</feature>
<feature type="region of interest" description="Disordered" evidence="4">
    <location>
        <begin position="256"/>
        <end position="277"/>
    </location>
</feature>
<feature type="modified residue" description="Phosphoserine" evidence="1">
    <location>
        <position position="267"/>
    </location>
</feature>
<feature type="glycosylation site" description="N-linked (GlcNAc...) asparagine" evidence="2">
    <location>
        <position position="57"/>
    </location>
</feature>
<feature type="glycosylation site" description="N-linked (GlcNAc...) asparagine" evidence="5">
    <location>
        <position position="83"/>
    </location>
</feature>
<feature type="glycosylation site" description="N-linked (GlcNAc...) asparagine" evidence="2">
    <location>
        <position position="94"/>
    </location>
</feature>
<feature type="glycosylation site" description="N-linked (GlcNAc...) asparagine" evidence="5">
    <location>
        <position position="107"/>
    </location>
</feature>
<feature type="glycosylation site" description="N-linked (GlcNAc...) asparagine" evidence="2">
    <location>
        <position position="113"/>
    </location>
</feature>
<feature type="disulfide bond" evidence="3">
    <location>
        <begin position="32"/>
        <end position="78"/>
    </location>
</feature>
<feature type="disulfide bond" evidence="3">
    <location>
        <begin position="132"/>
        <end position="167"/>
    </location>
</feature>
<feature type="disulfide bond" evidence="3">
    <location>
        <begin position="145"/>
        <end position="179"/>
    </location>
</feature>
<evidence type="ECO:0000250" key="1">
    <source>
        <dbReference type="UniProtKB" id="P24668"/>
    </source>
</evidence>
<evidence type="ECO:0000255" key="2"/>
<evidence type="ECO:0000255" key="3">
    <source>
        <dbReference type="PROSITE-ProRule" id="PRU01262"/>
    </source>
</evidence>
<evidence type="ECO:0000256" key="4">
    <source>
        <dbReference type="SAM" id="MobiDB-lite"/>
    </source>
</evidence>
<evidence type="ECO:0000269" key="5">
    <source>
    </source>
</evidence>
<proteinExistence type="evidence at protein level"/>